<sequence length="491" mass="53626">MNTQQLAKLRSIVPEMRRVRHIHFVGIGGAGMGGIAEVLANEGYQISGSDLAPNPVTQQLMNLGATIYFNHRPENVRDASVVVVSSAISADNPEIVAAHEARIPVIRRAEMLAELMRFRHGIAIAGTHGKTTTTAMVSSIYAEAGLDPTFVNGGLVKAAGVHARLGHGRYLIAEADESDASFLHLQPMVAIVTNIEADHMDTYQGDFENLKQTFINFLHNLPFYGRAVMCVDDPVIRELLPRVGRQTTTYGFSEDADVRVEDYQQIGPQGHFTLLRQDKEPMRVTLNAPGRHNALNAAAAVAVATEEGIDDEAILRALESFQGTGRRFDFLGEFPLEPVNGKSGTAMLVDDYGHHPTEVDATIKAARAGWPDKNLVMLFQPHRFTRTRDLYDDFANVLTQVDTLLMLEVYPAGEAPIPGADSRSLCRTIRGRGKIDPILVPDPARVAEMLAPVLTGNDLILVQGAGNIGKIARSLAEIKLKPQTPEEEQHD</sequence>
<evidence type="ECO:0000255" key="1">
    <source>
        <dbReference type="HAMAP-Rule" id="MF_00046"/>
    </source>
</evidence>
<dbReference type="EC" id="6.3.2.8" evidence="1"/>
<dbReference type="EMBL" id="CP000946">
    <property type="protein sequence ID" value="ACA79180.1"/>
    <property type="molecule type" value="Genomic_DNA"/>
</dbReference>
<dbReference type="RefSeq" id="WP_001096049.1">
    <property type="nucleotide sequence ID" value="NZ_MTFT01000035.1"/>
</dbReference>
<dbReference type="SMR" id="B1IR87"/>
<dbReference type="GeneID" id="75202092"/>
<dbReference type="KEGG" id="ecl:EcolC_3566"/>
<dbReference type="HOGENOM" id="CLU_028104_2_2_6"/>
<dbReference type="UniPathway" id="UPA00219"/>
<dbReference type="GO" id="GO:0005737">
    <property type="term" value="C:cytoplasm"/>
    <property type="evidence" value="ECO:0007669"/>
    <property type="project" value="UniProtKB-SubCell"/>
</dbReference>
<dbReference type="GO" id="GO:0005524">
    <property type="term" value="F:ATP binding"/>
    <property type="evidence" value="ECO:0007669"/>
    <property type="project" value="UniProtKB-UniRule"/>
</dbReference>
<dbReference type="GO" id="GO:0008763">
    <property type="term" value="F:UDP-N-acetylmuramate-L-alanine ligase activity"/>
    <property type="evidence" value="ECO:0007669"/>
    <property type="project" value="UniProtKB-UniRule"/>
</dbReference>
<dbReference type="GO" id="GO:0051301">
    <property type="term" value="P:cell division"/>
    <property type="evidence" value="ECO:0007669"/>
    <property type="project" value="UniProtKB-KW"/>
</dbReference>
<dbReference type="GO" id="GO:0071555">
    <property type="term" value="P:cell wall organization"/>
    <property type="evidence" value="ECO:0007669"/>
    <property type="project" value="UniProtKB-KW"/>
</dbReference>
<dbReference type="GO" id="GO:0009252">
    <property type="term" value="P:peptidoglycan biosynthetic process"/>
    <property type="evidence" value="ECO:0007669"/>
    <property type="project" value="UniProtKB-UniRule"/>
</dbReference>
<dbReference type="GO" id="GO:0008360">
    <property type="term" value="P:regulation of cell shape"/>
    <property type="evidence" value="ECO:0007669"/>
    <property type="project" value="UniProtKB-KW"/>
</dbReference>
<dbReference type="FunFam" id="3.40.1190.10:FF:000001">
    <property type="entry name" value="UDP-N-acetylmuramate--L-alanine ligase"/>
    <property type="match status" value="1"/>
</dbReference>
<dbReference type="FunFam" id="3.40.50.720:FF:000046">
    <property type="entry name" value="UDP-N-acetylmuramate--L-alanine ligase"/>
    <property type="match status" value="1"/>
</dbReference>
<dbReference type="FunFam" id="3.90.190.20:FF:000001">
    <property type="entry name" value="UDP-N-acetylmuramate--L-alanine ligase"/>
    <property type="match status" value="1"/>
</dbReference>
<dbReference type="Gene3D" id="3.90.190.20">
    <property type="entry name" value="Mur ligase, C-terminal domain"/>
    <property type="match status" value="1"/>
</dbReference>
<dbReference type="Gene3D" id="3.40.1190.10">
    <property type="entry name" value="Mur-like, catalytic domain"/>
    <property type="match status" value="1"/>
</dbReference>
<dbReference type="Gene3D" id="3.40.50.720">
    <property type="entry name" value="NAD(P)-binding Rossmann-like Domain"/>
    <property type="match status" value="1"/>
</dbReference>
<dbReference type="HAMAP" id="MF_00046">
    <property type="entry name" value="MurC"/>
    <property type="match status" value="1"/>
</dbReference>
<dbReference type="InterPro" id="IPR036565">
    <property type="entry name" value="Mur-like_cat_sf"/>
</dbReference>
<dbReference type="InterPro" id="IPR004101">
    <property type="entry name" value="Mur_ligase_C"/>
</dbReference>
<dbReference type="InterPro" id="IPR036615">
    <property type="entry name" value="Mur_ligase_C_dom_sf"/>
</dbReference>
<dbReference type="InterPro" id="IPR013221">
    <property type="entry name" value="Mur_ligase_cen"/>
</dbReference>
<dbReference type="InterPro" id="IPR000713">
    <property type="entry name" value="Mur_ligase_N"/>
</dbReference>
<dbReference type="InterPro" id="IPR050061">
    <property type="entry name" value="MurCDEF_pg_biosynth"/>
</dbReference>
<dbReference type="InterPro" id="IPR005758">
    <property type="entry name" value="UDP-N-AcMur_Ala_ligase_MurC"/>
</dbReference>
<dbReference type="NCBIfam" id="TIGR01082">
    <property type="entry name" value="murC"/>
    <property type="match status" value="1"/>
</dbReference>
<dbReference type="PANTHER" id="PTHR43445:SF3">
    <property type="entry name" value="UDP-N-ACETYLMURAMATE--L-ALANINE LIGASE"/>
    <property type="match status" value="1"/>
</dbReference>
<dbReference type="PANTHER" id="PTHR43445">
    <property type="entry name" value="UDP-N-ACETYLMURAMATE--L-ALANINE LIGASE-RELATED"/>
    <property type="match status" value="1"/>
</dbReference>
<dbReference type="Pfam" id="PF01225">
    <property type="entry name" value="Mur_ligase"/>
    <property type="match status" value="1"/>
</dbReference>
<dbReference type="Pfam" id="PF02875">
    <property type="entry name" value="Mur_ligase_C"/>
    <property type="match status" value="1"/>
</dbReference>
<dbReference type="Pfam" id="PF08245">
    <property type="entry name" value="Mur_ligase_M"/>
    <property type="match status" value="1"/>
</dbReference>
<dbReference type="SUPFAM" id="SSF51984">
    <property type="entry name" value="MurCD N-terminal domain"/>
    <property type="match status" value="1"/>
</dbReference>
<dbReference type="SUPFAM" id="SSF53623">
    <property type="entry name" value="MurD-like peptide ligases, catalytic domain"/>
    <property type="match status" value="1"/>
</dbReference>
<dbReference type="SUPFAM" id="SSF53244">
    <property type="entry name" value="MurD-like peptide ligases, peptide-binding domain"/>
    <property type="match status" value="1"/>
</dbReference>
<reference key="1">
    <citation type="submission" date="2008-02" db="EMBL/GenBank/DDBJ databases">
        <title>Complete sequence of Escherichia coli C str. ATCC 8739.</title>
        <authorList>
            <person name="Copeland A."/>
            <person name="Lucas S."/>
            <person name="Lapidus A."/>
            <person name="Glavina del Rio T."/>
            <person name="Dalin E."/>
            <person name="Tice H."/>
            <person name="Bruce D."/>
            <person name="Goodwin L."/>
            <person name="Pitluck S."/>
            <person name="Kiss H."/>
            <person name="Brettin T."/>
            <person name="Detter J.C."/>
            <person name="Han C."/>
            <person name="Kuske C.R."/>
            <person name="Schmutz J."/>
            <person name="Larimer F."/>
            <person name="Land M."/>
            <person name="Hauser L."/>
            <person name="Kyrpides N."/>
            <person name="Mikhailova N."/>
            <person name="Ingram L."/>
            <person name="Richardson P."/>
        </authorList>
    </citation>
    <scope>NUCLEOTIDE SEQUENCE [LARGE SCALE GENOMIC DNA]</scope>
    <source>
        <strain>ATCC 8739 / DSM 1576 / NBRC 3972 / NCIMB 8545 / WDCM 00012 / Crooks</strain>
    </source>
</reference>
<gene>
    <name evidence="1" type="primary">murC</name>
    <name type="ordered locus">EcolC_3566</name>
</gene>
<protein>
    <recommendedName>
        <fullName evidence="1">UDP-N-acetylmuramate--L-alanine ligase</fullName>
        <ecNumber evidence="1">6.3.2.8</ecNumber>
    </recommendedName>
    <alternativeName>
        <fullName evidence="1">UDP-N-acetylmuramoyl-L-alanine synthetase</fullName>
    </alternativeName>
</protein>
<proteinExistence type="inferred from homology"/>
<organism>
    <name type="scientific">Escherichia coli (strain ATCC 8739 / DSM 1576 / NBRC 3972 / NCIMB 8545 / WDCM 00012 / Crooks)</name>
    <dbReference type="NCBI Taxonomy" id="481805"/>
    <lineage>
        <taxon>Bacteria</taxon>
        <taxon>Pseudomonadati</taxon>
        <taxon>Pseudomonadota</taxon>
        <taxon>Gammaproteobacteria</taxon>
        <taxon>Enterobacterales</taxon>
        <taxon>Enterobacteriaceae</taxon>
        <taxon>Escherichia</taxon>
    </lineage>
</organism>
<comment type="function">
    <text evidence="1">Cell wall formation.</text>
</comment>
<comment type="catalytic activity">
    <reaction evidence="1">
        <text>UDP-N-acetyl-alpha-D-muramate + L-alanine + ATP = UDP-N-acetyl-alpha-D-muramoyl-L-alanine + ADP + phosphate + H(+)</text>
        <dbReference type="Rhea" id="RHEA:23372"/>
        <dbReference type="ChEBI" id="CHEBI:15378"/>
        <dbReference type="ChEBI" id="CHEBI:30616"/>
        <dbReference type="ChEBI" id="CHEBI:43474"/>
        <dbReference type="ChEBI" id="CHEBI:57972"/>
        <dbReference type="ChEBI" id="CHEBI:70757"/>
        <dbReference type="ChEBI" id="CHEBI:83898"/>
        <dbReference type="ChEBI" id="CHEBI:456216"/>
        <dbReference type="EC" id="6.3.2.8"/>
    </reaction>
</comment>
<comment type="pathway">
    <text evidence="1">Cell wall biogenesis; peptidoglycan biosynthesis.</text>
</comment>
<comment type="subcellular location">
    <subcellularLocation>
        <location evidence="1">Cytoplasm</location>
    </subcellularLocation>
</comment>
<comment type="similarity">
    <text evidence="1">Belongs to the MurCDEF family.</text>
</comment>
<accession>B1IR87</accession>
<feature type="chain" id="PRO_1000074738" description="UDP-N-acetylmuramate--L-alanine ligase">
    <location>
        <begin position="1"/>
        <end position="491"/>
    </location>
</feature>
<feature type="binding site" evidence="1">
    <location>
        <begin position="126"/>
        <end position="132"/>
    </location>
    <ligand>
        <name>ATP</name>
        <dbReference type="ChEBI" id="CHEBI:30616"/>
    </ligand>
</feature>
<keyword id="KW-0067">ATP-binding</keyword>
<keyword id="KW-0131">Cell cycle</keyword>
<keyword id="KW-0132">Cell division</keyword>
<keyword id="KW-0133">Cell shape</keyword>
<keyword id="KW-0961">Cell wall biogenesis/degradation</keyword>
<keyword id="KW-0963">Cytoplasm</keyword>
<keyword id="KW-0436">Ligase</keyword>
<keyword id="KW-0547">Nucleotide-binding</keyword>
<keyword id="KW-0573">Peptidoglycan synthesis</keyword>
<name>MURC_ECOLC</name>